<sequence length="32" mass="3340">NTATCSMHRLADFLGRSSNNFGAILSPTNVGS</sequence>
<proteinExistence type="inferred from homology"/>
<feature type="peptide" id="PRO_0000004124" description="Islet amyloid polypeptide">
    <location>
        <begin position="1" status="less than"/>
        <end position="32" status="greater than"/>
    </location>
</feature>
<feature type="non-terminal residue">
    <location>
        <position position="1"/>
    </location>
</feature>
<feature type="non-terminal residue">
    <location>
        <position position="32"/>
    </location>
</feature>
<gene>
    <name type="primary">IAPP</name>
</gene>
<comment type="function">
    <text evidence="2 3">Amylin/IAPP is a glucoregulatory peptide hormone that plays an important role in the regulation of energy homeostasis (By similarity). Selectively inhibits insulin-stimulated glucose utilization and glycogen deposition in muscle, while not affecting adipocyte glucose metabolism. IAPP function is mediated by the CALCR-RAMPs (AMYRs) receptor complexes. Amylin can also bind CALCR receptor in the absence of RAMPs, although it is more selective for AMYRs (By similarity).</text>
</comment>
<comment type="subunit">
    <text evidence="2 3">Can form homodimers. Interacts with IDE and INS. Interaction with INS inhibits homodimerization and fibril formation (By similarity).</text>
</comment>
<comment type="subcellular location">
    <subcellularLocation>
        <location evidence="2">Secreted</location>
    </subcellularLocation>
</comment>
<comment type="domain">
    <text evidence="1">The mature protein is largely unstructured in the absence of a cognate ligand.</text>
</comment>
<comment type="similarity">
    <text evidence="4">Belongs to the calcitonin family.</text>
</comment>
<reference key="1">
    <citation type="submission" date="1996-08" db="EMBL/GenBank/DDBJ databases">
        <title>PCR amplification of amylin 3-34 from genomic DNA.</title>
        <authorList>
            <person name="Albrandt K."/>
            <person name="Sierzega M.E."/>
            <person name="Mull E."/>
            <person name="Brady E.M.G."/>
        </authorList>
    </citation>
    <scope>NUCLEOTIDE SEQUENCE [GENOMIC DNA]</scope>
</reference>
<name>IAPP_SAGOE</name>
<accession>Q28934</accession>
<evidence type="ECO:0000250" key="1"/>
<evidence type="ECO:0000250" key="2">
    <source>
        <dbReference type="UniProtKB" id="P10997"/>
    </source>
</evidence>
<evidence type="ECO:0000250" key="3">
    <source>
        <dbReference type="UniProtKB" id="P12969"/>
    </source>
</evidence>
<evidence type="ECO:0000305" key="4"/>
<keyword id="KW-0034">Amyloid</keyword>
<keyword id="KW-0372">Hormone</keyword>
<keyword id="KW-0964">Secreted</keyword>
<dbReference type="EMBL" id="U62627">
    <property type="protein sequence ID" value="AAB05918.1"/>
    <property type="molecule type" value="Genomic_DNA"/>
</dbReference>
<dbReference type="SMR" id="Q28934"/>
<dbReference type="GO" id="GO:0005615">
    <property type="term" value="C:extracellular space"/>
    <property type="evidence" value="ECO:0007669"/>
    <property type="project" value="UniProtKB-ARBA"/>
</dbReference>
<dbReference type="GO" id="GO:0005179">
    <property type="term" value="F:hormone activity"/>
    <property type="evidence" value="ECO:0000250"/>
    <property type="project" value="UniProtKB"/>
</dbReference>
<dbReference type="GO" id="GO:0048018">
    <property type="term" value="F:receptor ligand activity"/>
    <property type="evidence" value="ECO:0000250"/>
    <property type="project" value="UniProtKB"/>
</dbReference>
<dbReference type="GO" id="GO:0097647">
    <property type="term" value="P:amylin receptor signaling pathway"/>
    <property type="evidence" value="ECO:0000250"/>
    <property type="project" value="UniProtKB"/>
</dbReference>
<dbReference type="Gene3D" id="6.10.250.2190">
    <property type="match status" value="1"/>
</dbReference>
<dbReference type="InterPro" id="IPR021116">
    <property type="entry name" value="Calcitonin/adrenomedullin"/>
</dbReference>
<dbReference type="InterPro" id="IPR001693">
    <property type="entry name" value="Calcitonin_peptide-like"/>
</dbReference>
<dbReference type="InterPro" id="IPR000443">
    <property type="entry name" value="IAPP"/>
</dbReference>
<dbReference type="Pfam" id="PF00214">
    <property type="entry name" value="Calc_CGRP_IAPP"/>
    <property type="match status" value="1"/>
</dbReference>
<dbReference type="PRINTS" id="PR00818">
    <property type="entry name" value="ISLETAMYLOID"/>
</dbReference>
<dbReference type="SMART" id="SM00113">
    <property type="entry name" value="CALCITONIN"/>
    <property type="match status" value="1"/>
</dbReference>
<protein>
    <recommendedName>
        <fullName>Islet amyloid polypeptide</fullName>
        <shortName>IAPP</shortName>
    </recommendedName>
    <alternativeName>
        <fullName>Amylin</fullName>
    </alternativeName>
</protein>
<organism>
    <name type="scientific">Saguinus oedipus</name>
    <name type="common">Cotton-top tamarin</name>
    <dbReference type="NCBI Taxonomy" id="9490"/>
    <lineage>
        <taxon>Eukaryota</taxon>
        <taxon>Metazoa</taxon>
        <taxon>Chordata</taxon>
        <taxon>Craniata</taxon>
        <taxon>Vertebrata</taxon>
        <taxon>Euteleostomi</taxon>
        <taxon>Mammalia</taxon>
        <taxon>Eutheria</taxon>
        <taxon>Euarchontoglires</taxon>
        <taxon>Primates</taxon>
        <taxon>Haplorrhini</taxon>
        <taxon>Platyrrhini</taxon>
        <taxon>Cebidae</taxon>
        <taxon>Callitrichinae</taxon>
        <taxon>Saguinus</taxon>
    </lineage>
</organism>